<reference key="1">
    <citation type="submission" date="2007-03" db="EMBL/GenBank/DDBJ databases">
        <title>Multi-locus genotyping identifies infections with multiple strains of T. tonsurans.</title>
        <authorList>
            <person name="Abdel-Rahman S.M."/>
            <person name="Preuett B.L."/>
            <person name="Gaedigk A."/>
        </authorList>
    </citation>
    <scope>NUCLEOTIDE SEQUENCE [GENOMIC DNA]</scope>
</reference>
<comment type="function">
    <text evidence="1">Vacuolar carboxypeptidase involved in degradation of small peptides. Digests preferentially peptides containing an aliphatic or hydrophobic residue in P1' position, as well as methionine, leucine or phenylalanine in P1 position of ester substrate (By similarity).</text>
</comment>
<comment type="catalytic activity">
    <reaction evidence="3">
        <text>Release of a C-terminal amino acid with broad specificity.</text>
        <dbReference type="EC" id="3.4.16.5"/>
    </reaction>
</comment>
<comment type="subcellular location">
    <subcellularLocation>
        <location evidence="1">Vacuole</location>
    </subcellularLocation>
</comment>
<comment type="similarity">
    <text evidence="4">Belongs to the peptidase S10 family.</text>
</comment>
<dbReference type="EC" id="3.4.16.5"/>
<dbReference type="EMBL" id="EF490685">
    <property type="protein sequence ID" value="ABQ96589.1"/>
    <property type="molecule type" value="Genomic_DNA"/>
</dbReference>
<dbReference type="SMR" id="A5YCB8"/>
<dbReference type="ESTHER" id="triru-q5j6j0">
    <property type="family name" value="Carboxypeptidase_S10"/>
</dbReference>
<dbReference type="MEROPS" id="S10.001"/>
<dbReference type="GlyCosmos" id="A5YCB8">
    <property type="glycosylation" value="2 sites, No reported glycans"/>
</dbReference>
<dbReference type="VEuPathDB" id="FungiDB:TESG_05174"/>
<dbReference type="GO" id="GO:0000324">
    <property type="term" value="C:fungal-type vacuole"/>
    <property type="evidence" value="ECO:0007669"/>
    <property type="project" value="TreeGrafter"/>
</dbReference>
<dbReference type="GO" id="GO:0004185">
    <property type="term" value="F:serine-type carboxypeptidase activity"/>
    <property type="evidence" value="ECO:0007669"/>
    <property type="project" value="UniProtKB-EC"/>
</dbReference>
<dbReference type="GO" id="GO:0006508">
    <property type="term" value="P:proteolysis"/>
    <property type="evidence" value="ECO:0007669"/>
    <property type="project" value="UniProtKB-KW"/>
</dbReference>
<dbReference type="FunFam" id="1.10.287.410:FF:000001">
    <property type="entry name" value="Carboxypeptidase Y"/>
    <property type="match status" value="1"/>
</dbReference>
<dbReference type="Gene3D" id="1.10.287.410">
    <property type="match status" value="1"/>
</dbReference>
<dbReference type="Gene3D" id="3.40.50.1820">
    <property type="entry name" value="alpha/beta hydrolase"/>
    <property type="match status" value="1"/>
</dbReference>
<dbReference type="InterPro" id="IPR029058">
    <property type="entry name" value="AB_hydrolase_fold"/>
</dbReference>
<dbReference type="InterPro" id="IPR001563">
    <property type="entry name" value="Peptidase_S10"/>
</dbReference>
<dbReference type="InterPro" id="IPR018202">
    <property type="entry name" value="Ser_caboxypep_ser_AS"/>
</dbReference>
<dbReference type="PANTHER" id="PTHR11802:SF113">
    <property type="entry name" value="SERINE CARBOXYPEPTIDASE CTSA-4.1"/>
    <property type="match status" value="1"/>
</dbReference>
<dbReference type="PANTHER" id="PTHR11802">
    <property type="entry name" value="SERINE PROTEASE FAMILY S10 SERINE CARBOXYPEPTIDASE"/>
    <property type="match status" value="1"/>
</dbReference>
<dbReference type="Pfam" id="PF00450">
    <property type="entry name" value="Peptidase_S10"/>
    <property type="match status" value="1"/>
</dbReference>
<dbReference type="PRINTS" id="PR00724">
    <property type="entry name" value="CRBOXYPTASEC"/>
</dbReference>
<dbReference type="SUPFAM" id="SSF53474">
    <property type="entry name" value="alpha/beta-Hydrolases"/>
    <property type="match status" value="1"/>
</dbReference>
<dbReference type="PROSITE" id="PS00131">
    <property type="entry name" value="CARBOXYPEPT_SER_SER"/>
    <property type="match status" value="1"/>
</dbReference>
<sequence>MKFLTTGLLATAALAAAQEQQVLQAEDGMGQAPQRGSSIFDETLQKFQSSLEDGISHFWSEMKTNFKDYLPLISLPKKHTRRPDSEWDHVVRGADIESVWVQGADGEKRREIDGKLHNYDLRVKAVDPSKLGVDAGVKQYSGYLDDNDADKHLFYWFFESRNDPKNDPVVLWLNGGPGCSSLTGLFLELGPATIDKNLKVVSNPYSWNSNASVIFLDQPVNVGFSYSGSSVSDTVAAGKDIYALLTLFFKQFPEYATQDFHISGESYAGHYIPVFAAEILSHKNTNINLKSALIGNGLTDPLTQYPQYRPMACGEGGYPAVLDQGTCRSMDNSLERCLSLIETCYSSESAWICVPAAMYCNSAILAPYQQTGMNPYDVRNKCEDMASLCYPQLNVITEWLNQKSVMQALGVEVESYESCNSGINRDFLFHGDWMKPYHRLVPSVLEKIPVLIYAGDADFICNWLGNQAWTDALEWPGHKKFAEAKLEDLKIVDNKNKGKKIGQVKSSGNFTFMRIFGAGHMVPLNQPEASLEFLNRWLRGEWH</sequence>
<protein>
    <recommendedName>
        <fullName>Carboxypeptidase Y homolog A</fullName>
        <ecNumber>3.4.16.5</ecNumber>
    </recommendedName>
</protein>
<organism>
    <name type="scientific">Trichophyton tonsurans</name>
    <name type="common">Scalp ringworm fungus</name>
    <dbReference type="NCBI Taxonomy" id="34387"/>
    <lineage>
        <taxon>Eukaryota</taxon>
        <taxon>Fungi</taxon>
        <taxon>Dikarya</taxon>
        <taxon>Ascomycota</taxon>
        <taxon>Pezizomycotina</taxon>
        <taxon>Eurotiomycetes</taxon>
        <taxon>Eurotiomycetidae</taxon>
        <taxon>Onygenales</taxon>
        <taxon>Arthrodermataceae</taxon>
        <taxon>Trichophyton</taxon>
    </lineage>
</organism>
<name>CBPYA_TRITO</name>
<evidence type="ECO:0000250" key="1"/>
<evidence type="ECO:0000255" key="2"/>
<evidence type="ECO:0000255" key="3">
    <source>
        <dbReference type="PROSITE-ProRule" id="PRU10074"/>
    </source>
</evidence>
<evidence type="ECO:0000305" key="4"/>
<proteinExistence type="inferred from homology"/>
<gene>
    <name type="primary">CPYA</name>
    <name type="synonym">CarbY</name>
</gene>
<keyword id="KW-0121">Carboxypeptidase</keyword>
<keyword id="KW-1015">Disulfide bond</keyword>
<keyword id="KW-0325">Glycoprotein</keyword>
<keyword id="KW-0378">Hydrolase</keyword>
<keyword id="KW-0645">Protease</keyword>
<keyword id="KW-0732">Signal</keyword>
<keyword id="KW-0926">Vacuole</keyword>
<keyword id="KW-0865">Zymogen</keyword>
<accession>A5YCB8</accession>
<feature type="signal peptide" evidence="2">
    <location>
        <begin position="1"/>
        <end position="17"/>
    </location>
</feature>
<feature type="propeptide" id="PRO_0000407486" evidence="1">
    <location>
        <begin position="18"/>
        <end position="124"/>
    </location>
</feature>
<feature type="chain" id="PRO_0000407487" description="Carboxypeptidase Y homolog A">
    <location>
        <begin position="125"/>
        <end position="543"/>
    </location>
</feature>
<feature type="active site" evidence="3">
    <location>
        <position position="266"/>
    </location>
</feature>
<feature type="active site" evidence="3">
    <location>
        <position position="458"/>
    </location>
</feature>
<feature type="active site" evidence="3">
    <location>
        <position position="520"/>
    </location>
</feature>
<feature type="glycosylation site" description="N-linked (GlcNAc...) asparagine" evidence="2">
    <location>
        <position position="210"/>
    </location>
</feature>
<feature type="glycosylation site" description="N-linked (GlcNAc...) asparagine" evidence="2">
    <location>
        <position position="509"/>
    </location>
</feature>
<feature type="disulfide bond" evidence="1">
    <location>
        <begin position="179"/>
        <end position="419"/>
    </location>
</feature>
<feature type="disulfide bond" evidence="1">
    <location>
        <begin position="313"/>
        <end position="327"/>
    </location>
</feature>
<feature type="disulfide bond" evidence="1">
    <location>
        <begin position="337"/>
        <end position="360"/>
    </location>
</feature>
<feature type="disulfide bond" evidence="1">
    <location>
        <begin position="344"/>
        <end position="353"/>
    </location>
</feature>
<feature type="disulfide bond" evidence="1">
    <location>
        <begin position="382"/>
        <end position="389"/>
    </location>
</feature>